<name>COB22_ORYSJ</name>
<gene>
    <name type="ordered locus">Os02g0209100</name>
    <name type="ordered locus">LOC_Os02g11840</name>
    <name type="ORF">OJ1006_A02.24</name>
</gene>
<dbReference type="EMBL" id="AP003977">
    <property type="protein sequence ID" value="BAD25014.1"/>
    <property type="molecule type" value="Genomic_DNA"/>
</dbReference>
<dbReference type="EMBL" id="AP008208">
    <property type="protein sequence ID" value="BAF08178.1"/>
    <property type="molecule type" value="Genomic_DNA"/>
</dbReference>
<dbReference type="EMBL" id="AP014958">
    <property type="status" value="NOT_ANNOTATED_CDS"/>
    <property type="molecule type" value="Genomic_DNA"/>
</dbReference>
<dbReference type="EMBL" id="AK099955">
    <property type="status" value="NOT_ANNOTATED_CDS"/>
    <property type="molecule type" value="mRNA"/>
</dbReference>
<dbReference type="SMR" id="Q6H8D5"/>
<dbReference type="FunCoup" id="Q6H8D5">
    <property type="interactions" value="3258"/>
</dbReference>
<dbReference type="STRING" id="39947.Q6H8D5"/>
<dbReference type="PaxDb" id="39947-Q6H8D5"/>
<dbReference type="KEGG" id="dosa:Os02g0209100"/>
<dbReference type="InParanoid" id="Q6H8D5"/>
<dbReference type="Proteomes" id="UP000000763">
    <property type="component" value="Chromosome 2"/>
</dbReference>
<dbReference type="Proteomes" id="UP000059680">
    <property type="component" value="Chromosome 2"/>
</dbReference>
<dbReference type="GO" id="GO:0030126">
    <property type="term" value="C:COPI vesicle coat"/>
    <property type="evidence" value="ECO:0000318"/>
    <property type="project" value="GO_Central"/>
</dbReference>
<dbReference type="GO" id="GO:0000139">
    <property type="term" value="C:Golgi membrane"/>
    <property type="evidence" value="ECO:0007669"/>
    <property type="project" value="UniProtKB-SubCell"/>
</dbReference>
<dbReference type="GO" id="GO:0005198">
    <property type="term" value="F:structural molecule activity"/>
    <property type="evidence" value="ECO:0007669"/>
    <property type="project" value="InterPro"/>
</dbReference>
<dbReference type="GO" id="GO:0006888">
    <property type="term" value="P:endoplasmic reticulum to Golgi vesicle-mediated transport"/>
    <property type="evidence" value="ECO:0000318"/>
    <property type="project" value="GO_Central"/>
</dbReference>
<dbReference type="GO" id="GO:0006891">
    <property type="term" value="P:intra-Golgi vesicle-mediated transport"/>
    <property type="evidence" value="ECO:0000318"/>
    <property type="project" value="GO_Central"/>
</dbReference>
<dbReference type="GO" id="GO:0006886">
    <property type="term" value="P:intracellular protein transport"/>
    <property type="evidence" value="ECO:0000318"/>
    <property type="project" value="GO_Central"/>
</dbReference>
<dbReference type="GO" id="GO:0006890">
    <property type="term" value="P:retrograde vesicle-mediated transport, Golgi to endoplasmic reticulum"/>
    <property type="evidence" value="ECO:0000318"/>
    <property type="project" value="GO_Central"/>
</dbReference>
<dbReference type="CDD" id="cd22947">
    <property type="entry name" value="Coatomer_WDAD_beta-like"/>
    <property type="match status" value="1"/>
</dbReference>
<dbReference type="CDD" id="cd00200">
    <property type="entry name" value="WD40"/>
    <property type="match status" value="1"/>
</dbReference>
<dbReference type="FunFam" id="1.25.40.470:FF:000001">
    <property type="entry name" value="Coatomer subunit beta"/>
    <property type="match status" value="1"/>
</dbReference>
<dbReference type="FunFam" id="2.130.10.10:FF:000008">
    <property type="entry name" value="Coatomer subunit beta"/>
    <property type="match status" value="1"/>
</dbReference>
<dbReference type="Gene3D" id="1.25.40.470">
    <property type="match status" value="1"/>
</dbReference>
<dbReference type="Gene3D" id="2.130.10.10">
    <property type="entry name" value="YVTN repeat-like/Quinoprotein amine dehydrogenase"/>
    <property type="match status" value="1"/>
</dbReference>
<dbReference type="InterPro" id="IPR006692">
    <property type="entry name" value="Beta-prop_COPA/B_2nd"/>
</dbReference>
<dbReference type="InterPro" id="IPR050844">
    <property type="entry name" value="Coatomer_complex_subunit"/>
</dbReference>
<dbReference type="InterPro" id="IPR016453">
    <property type="entry name" value="COPB2"/>
</dbReference>
<dbReference type="InterPro" id="IPR020472">
    <property type="entry name" value="G-protein_beta_WD-40_rep"/>
</dbReference>
<dbReference type="InterPro" id="IPR011048">
    <property type="entry name" value="Haem_d1_sf"/>
</dbReference>
<dbReference type="InterPro" id="IPR056176">
    <property type="entry name" value="TPR_COPA_B"/>
</dbReference>
<dbReference type="InterPro" id="IPR015943">
    <property type="entry name" value="WD40/YVTN_repeat-like_dom_sf"/>
</dbReference>
<dbReference type="InterPro" id="IPR036322">
    <property type="entry name" value="WD40_repeat_dom_sf"/>
</dbReference>
<dbReference type="InterPro" id="IPR001680">
    <property type="entry name" value="WD40_rpt"/>
</dbReference>
<dbReference type="PANTHER" id="PTHR19876">
    <property type="entry name" value="COATOMER"/>
    <property type="match status" value="1"/>
</dbReference>
<dbReference type="PANTHER" id="PTHR19876:SF68">
    <property type="entry name" value="COATOMER SUBUNIT BETA'-2"/>
    <property type="match status" value="1"/>
</dbReference>
<dbReference type="Pfam" id="PF04053">
    <property type="entry name" value="B-prop_COPA_B_2nd"/>
    <property type="match status" value="1"/>
</dbReference>
<dbReference type="Pfam" id="PF23953">
    <property type="entry name" value="TPR_COPA_B"/>
    <property type="match status" value="1"/>
</dbReference>
<dbReference type="Pfam" id="PF00400">
    <property type="entry name" value="WD40"/>
    <property type="match status" value="5"/>
</dbReference>
<dbReference type="PIRSF" id="PIRSF005567">
    <property type="entry name" value="Coatomer_beta'_subunit"/>
    <property type="match status" value="1"/>
</dbReference>
<dbReference type="PRINTS" id="PR00320">
    <property type="entry name" value="GPROTEINBRPT"/>
</dbReference>
<dbReference type="SMART" id="SM00320">
    <property type="entry name" value="WD40"/>
    <property type="match status" value="6"/>
</dbReference>
<dbReference type="SUPFAM" id="SSF51004">
    <property type="entry name" value="C-terminal (heme d1) domain of cytochrome cd1-nitrite reductase"/>
    <property type="match status" value="1"/>
</dbReference>
<dbReference type="SUPFAM" id="SSF50978">
    <property type="entry name" value="WD40 repeat-like"/>
    <property type="match status" value="1"/>
</dbReference>
<dbReference type="PROSITE" id="PS50082">
    <property type="entry name" value="WD_REPEATS_2"/>
    <property type="match status" value="5"/>
</dbReference>
<dbReference type="PROSITE" id="PS50294">
    <property type="entry name" value="WD_REPEATS_REGION"/>
    <property type="match status" value="1"/>
</dbReference>
<sequence>MPLRLDIKRKLAQRSERVKSVDLHPTEPWILSSLYSGSVCIWNYQTQTMVKSFEVTELPVRSSKFIARKQWIVAGADDMFIRVYNYNTMDKVKVFEAHTDYIRCVAVHPTQPFVLSSSDDMLIKLWDWDKGWMCTQIFEGHSHYVMQVTFNPKDTNTFASASLDRTVKVWSLGSPDPNFTLDGHSKGVNCVDYFTGGDRPYLITGSDDQTAKVWDYQTKSCVQTLEGHAHNVSAVCFHPELPITLTGSEDGTVRLWHSTTYRLENTLNYGLERVWALGYMKGSRRVVIGYDEGTIMIKIGREVPVASMDSSGKIIWSKHNEIQTVNIKTIGADNEIADGERLPLAVKELGTCDLYPQSLRHNPNGRFVVVCGDGEYIIYTALAWRNRSFGSALEFVWSVDGEYAVRESTSRIKIYSKNFQERKSIRPPFSAERIFGGVLLAMCTNDFICFHDWAEGRMIRRIDVNVKNLYWADSGDLVTIASDTSFYILKYNRDVVSSHLDGGGSVGEEGVEDAFELLHEINERIRTGLWVGDCFIYNNSSSRLNYCVGGEVTTLFHLDRQMYLLGYLANQSRVYLIDKQFNVVGYTLLLTMIEYKTLVMRGDFDRANALLPSIPKEQHDSVARFLESQGMLEEALEIATDSNYRFDLAVQLGRLEVAKAIAIEAQSESKWRQLGELAMSTGKLDMAEECLLHAMDLSGLLLLYSSLGDAEGLTKLTSMAKEQGKNNVAFLCFFMLGKLEECLQLLIESNRIPEAALMSRSYLPSKVPEIVTLWKKDLQKVNPKAAESLADPDEYPNLFEDWQIALNVEANVAPKRGIYPPAEEYIIHAERPNETLVEAFKSMHIHLEEVLPDENGDDTHEAIEENGVEESQEDAVEVDVEADGSTDGAVLVNGNDTEEQWGTNNEESSA</sequence>
<evidence type="ECO:0000250" key="1"/>
<evidence type="ECO:0000256" key="2">
    <source>
        <dbReference type="SAM" id="MobiDB-lite"/>
    </source>
</evidence>
<evidence type="ECO:0000305" key="3"/>
<protein>
    <recommendedName>
        <fullName>Coatomer subunit beta'-2</fullName>
    </recommendedName>
    <alternativeName>
        <fullName>Beta'-coat protein 2</fullName>
        <shortName>Beta'-COP 2</shortName>
    </alternativeName>
</protein>
<accession>Q6H8D5</accession>
<accession>Q0E2W0</accession>
<reference key="1">
    <citation type="journal article" date="2005" name="Nature">
        <title>The map-based sequence of the rice genome.</title>
        <authorList>
            <consortium name="International rice genome sequencing project (IRGSP)"/>
        </authorList>
    </citation>
    <scope>NUCLEOTIDE SEQUENCE [LARGE SCALE GENOMIC DNA]</scope>
    <source>
        <strain>cv. Nipponbare</strain>
    </source>
</reference>
<reference key="2">
    <citation type="journal article" date="2008" name="Nucleic Acids Res.">
        <title>The rice annotation project database (RAP-DB): 2008 update.</title>
        <authorList>
            <consortium name="The rice annotation project (RAP)"/>
        </authorList>
    </citation>
    <scope>GENOME REANNOTATION</scope>
    <source>
        <strain>cv. Nipponbare</strain>
    </source>
</reference>
<reference key="3">
    <citation type="journal article" date="2013" name="Rice">
        <title>Improvement of the Oryza sativa Nipponbare reference genome using next generation sequence and optical map data.</title>
        <authorList>
            <person name="Kawahara Y."/>
            <person name="de la Bastide M."/>
            <person name="Hamilton J.P."/>
            <person name="Kanamori H."/>
            <person name="McCombie W.R."/>
            <person name="Ouyang S."/>
            <person name="Schwartz D.C."/>
            <person name="Tanaka T."/>
            <person name="Wu J."/>
            <person name="Zhou S."/>
            <person name="Childs K.L."/>
            <person name="Davidson R.M."/>
            <person name="Lin H."/>
            <person name="Quesada-Ocampo L."/>
            <person name="Vaillancourt B."/>
            <person name="Sakai H."/>
            <person name="Lee S.S."/>
            <person name="Kim J."/>
            <person name="Numa H."/>
            <person name="Itoh T."/>
            <person name="Buell C.R."/>
            <person name="Matsumoto T."/>
        </authorList>
    </citation>
    <scope>GENOME REANNOTATION</scope>
    <source>
        <strain>cv. Nipponbare</strain>
    </source>
</reference>
<reference key="4">
    <citation type="journal article" date="2003" name="Science">
        <title>Collection, mapping, and annotation of over 28,000 cDNA clones from japonica rice.</title>
        <authorList>
            <consortium name="The rice full-length cDNA consortium"/>
        </authorList>
    </citation>
    <scope>NUCLEOTIDE SEQUENCE [LARGE SCALE MRNA] OF 290-910</scope>
    <source>
        <strain>cv. Nipponbare</strain>
    </source>
</reference>
<keyword id="KW-0963">Cytoplasm</keyword>
<keyword id="KW-0968">Cytoplasmic vesicle</keyword>
<keyword id="KW-0931">ER-Golgi transport</keyword>
<keyword id="KW-0333">Golgi apparatus</keyword>
<keyword id="KW-0472">Membrane</keyword>
<keyword id="KW-0653">Protein transport</keyword>
<keyword id="KW-1185">Reference proteome</keyword>
<keyword id="KW-0677">Repeat</keyword>
<keyword id="KW-0813">Transport</keyword>
<keyword id="KW-0853">WD repeat</keyword>
<feature type="chain" id="PRO_0000285608" description="Coatomer subunit beta'-2">
    <location>
        <begin position="1"/>
        <end position="910"/>
    </location>
</feature>
<feature type="repeat" description="WD 1">
    <location>
        <begin position="13"/>
        <end position="52"/>
    </location>
</feature>
<feature type="repeat" description="WD 2">
    <location>
        <begin position="55"/>
        <end position="94"/>
    </location>
</feature>
<feature type="repeat" description="WD 3">
    <location>
        <begin position="97"/>
        <end position="136"/>
    </location>
</feature>
<feature type="repeat" description="WD 4">
    <location>
        <begin position="140"/>
        <end position="180"/>
    </location>
</feature>
<feature type="repeat" description="WD 5">
    <location>
        <begin position="183"/>
        <end position="224"/>
    </location>
</feature>
<feature type="repeat" description="WD 6">
    <location>
        <begin position="227"/>
        <end position="266"/>
    </location>
</feature>
<feature type="repeat" description="WD 7">
    <location>
        <begin position="269"/>
        <end position="309"/>
    </location>
</feature>
<feature type="repeat" description="WD 8">
    <location>
        <begin position="351"/>
        <end position="393"/>
    </location>
</feature>
<feature type="repeat" description="WD 9">
    <location>
        <begin position="461"/>
        <end position="501"/>
    </location>
</feature>
<feature type="region of interest" description="Disordered" evidence="2">
    <location>
        <begin position="882"/>
        <end position="910"/>
    </location>
</feature>
<feature type="compositionally biased region" description="Polar residues" evidence="2">
    <location>
        <begin position="900"/>
        <end position="910"/>
    </location>
</feature>
<comment type="function">
    <text evidence="1">The coatomer is a cytosolic protein complex that binds to dilysine motifs and reversibly associates with Golgi non-clathrin-coated vesicles, which further mediate biosynthetic protein transport from the ER, via the Golgi up to the trans Golgi network. Coatomer complex is required for budding from Golgi membranes, and is essential for the retrograde Golgi-to-ER transport of dilysine-tagged proteins (By similarity).</text>
</comment>
<comment type="subunit">
    <text evidence="1">Oligomeric complex that consists of at least the alpha, beta, beta', gamma, delta, epsilon and zeta subunits.</text>
</comment>
<comment type="subcellular location">
    <subcellularLocation>
        <location evidence="1">Cytoplasm</location>
    </subcellularLocation>
    <subcellularLocation>
        <location evidence="1">Golgi apparatus membrane</location>
        <topology evidence="1">Peripheral membrane protein</topology>
        <orientation evidence="1">Cytoplasmic side</orientation>
    </subcellularLocation>
    <subcellularLocation>
        <location evidence="1">Cytoplasmic vesicle</location>
        <location evidence="1">COPI-coated vesicle membrane</location>
        <topology evidence="1">Peripheral membrane protein</topology>
        <orientation evidence="1">Cytoplasmic side</orientation>
    </subcellularLocation>
    <text evidence="1">The coatomer is cytoplasmic or polymerized on the cytoplasmic side of the Golgi, as well as on the vesicles/buds originating from it.</text>
</comment>
<comment type="similarity">
    <text evidence="3">Belongs to the WD repeat COPB2 family.</text>
</comment>
<comment type="sequence caution" evidence="3">
    <conflict type="frameshift">
        <sequence resource="EMBL" id="AK099955"/>
    </conflict>
</comment>
<proteinExistence type="evidence at transcript level"/>
<organism>
    <name type="scientific">Oryza sativa subsp. japonica</name>
    <name type="common">Rice</name>
    <dbReference type="NCBI Taxonomy" id="39947"/>
    <lineage>
        <taxon>Eukaryota</taxon>
        <taxon>Viridiplantae</taxon>
        <taxon>Streptophyta</taxon>
        <taxon>Embryophyta</taxon>
        <taxon>Tracheophyta</taxon>
        <taxon>Spermatophyta</taxon>
        <taxon>Magnoliopsida</taxon>
        <taxon>Liliopsida</taxon>
        <taxon>Poales</taxon>
        <taxon>Poaceae</taxon>
        <taxon>BOP clade</taxon>
        <taxon>Oryzoideae</taxon>
        <taxon>Oryzeae</taxon>
        <taxon>Oryzinae</taxon>
        <taxon>Oryza</taxon>
        <taxon>Oryza sativa</taxon>
    </lineage>
</organism>